<dbReference type="EC" id="1.1.1.58" evidence="1"/>
<dbReference type="EMBL" id="CP000247">
    <property type="protein sequence ID" value="ABG69512.1"/>
    <property type="molecule type" value="Genomic_DNA"/>
</dbReference>
<dbReference type="RefSeq" id="WP_000854642.1">
    <property type="nucleotide sequence ID" value="NC_008253.1"/>
</dbReference>
<dbReference type="SMR" id="Q0THR7"/>
<dbReference type="KEGG" id="ecp:ECP_1505"/>
<dbReference type="HOGENOM" id="CLU_027324_1_0_6"/>
<dbReference type="UniPathway" id="UPA00246"/>
<dbReference type="Proteomes" id="UP000009182">
    <property type="component" value="Chromosome"/>
</dbReference>
<dbReference type="GO" id="GO:0005829">
    <property type="term" value="C:cytosol"/>
    <property type="evidence" value="ECO:0007669"/>
    <property type="project" value="TreeGrafter"/>
</dbReference>
<dbReference type="GO" id="GO:0008926">
    <property type="term" value="F:mannitol-1-phosphate 5-dehydrogenase activity"/>
    <property type="evidence" value="ECO:0007669"/>
    <property type="project" value="TreeGrafter"/>
</dbReference>
<dbReference type="GO" id="GO:0009026">
    <property type="term" value="F:tagaturonate reductase activity"/>
    <property type="evidence" value="ECO:0007669"/>
    <property type="project" value="UniProtKB-UniRule"/>
</dbReference>
<dbReference type="GO" id="GO:0019698">
    <property type="term" value="P:D-galacturonate catabolic process"/>
    <property type="evidence" value="ECO:0007669"/>
    <property type="project" value="TreeGrafter"/>
</dbReference>
<dbReference type="GO" id="GO:0019592">
    <property type="term" value="P:mannitol catabolic process"/>
    <property type="evidence" value="ECO:0007669"/>
    <property type="project" value="TreeGrafter"/>
</dbReference>
<dbReference type="FunFam" id="1.10.1040.10:FF:000018">
    <property type="entry name" value="Altronate oxidoreductase"/>
    <property type="match status" value="1"/>
</dbReference>
<dbReference type="FunFam" id="3.40.50.720:FF:000153">
    <property type="entry name" value="Altronate oxidoreductase"/>
    <property type="match status" value="1"/>
</dbReference>
<dbReference type="Gene3D" id="1.10.1040.10">
    <property type="entry name" value="N-(1-d-carboxylethyl)-l-norvaline Dehydrogenase, domain 2"/>
    <property type="match status" value="1"/>
</dbReference>
<dbReference type="Gene3D" id="3.40.50.720">
    <property type="entry name" value="NAD(P)-binding Rossmann-like Domain"/>
    <property type="match status" value="1"/>
</dbReference>
<dbReference type="HAMAP" id="MF_00670">
    <property type="entry name" value="Altron_oxidoreduct"/>
    <property type="match status" value="1"/>
</dbReference>
<dbReference type="InterPro" id="IPR008927">
    <property type="entry name" value="6-PGluconate_DH-like_C_sf"/>
</dbReference>
<dbReference type="InterPro" id="IPR013328">
    <property type="entry name" value="6PGD_dom2"/>
</dbReference>
<dbReference type="InterPro" id="IPR023668">
    <property type="entry name" value="Altronate_OxRdtase"/>
</dbReference>
<dbReference type="InterPro" id="IPR013118">
    <property type="entry name" value="Mannitol_DH_C"/>
</dbReference>
<dbReference type="InterPro" id="IPR013131">
    <property type="entry name" value="Mannitol_DH_N"/>
</dbReference>
<dbReference type="InterPro" id="IPR036291">
    <property type="entry name" value="NAD(P)-bd_dom_sf"/>
</dbReference>
<dbReference type="NCBIfam" id="NF002969">
    <property type="entry name" value="PRK03643.1"/>
    <property type="match status" value="1"/>
</dbReference>
<dbReference type="PANTHER" id="PTHR30524:SF0">
    <property type="entry name" value="ALTRONATE OXIDOREDUCTASE-RELATED"/>
    <property type="match status" value="1"/>
</dbReference>
<dbReference type="PANTHER" id="PTHR30524">
    <property type="entry name" value="MANNITOL-1-PHOSPHATE 5-DEHYDROGENASE"/>
    <property type="match status" value="1"/>
</dbReference>
<dbReference type="Pfam" id="PF01232">
    <property type="entry name" value="Mannitol_dh"/>
    <property type="match status" value="1"/>
</dbReference>
<dbReference type="Pfam" id="PF08125">
    <property type="entry name" value="Mannitol_dh_C"/>
    <property type="match status" value="1"/>
</dbReference>
<dbReference type="SUPFAM" id="SSF48179">
    <property type="entry name" value="6-phosphogluconate dehydrogenase C-terminal domain-like"/>
    <property type="match status" value="1"/>
</dbReference>
<dbReference type="SUPFAM" id="SSF51735">
    <property type="entry name" value="NAD(P)-binding Rossmann-fold domains"/>
    <property type="match status" value="1"/>
</dbReference>
<accession>Q0THR7</accession>
<reference key="1">
    <citation type="journal article" date="2006" name="Mol. Microbiol.">
        <title>Role of pathogenicity island-associated integrases in the genome plasticity of uropathogenic Escherichia coli strain 536.</title>
        <authorList>
            <person name="Hochhut B."/>
            <person name="Wilde C."/>
            <person name="Balling G."/>
            <person name="Middendorf B."/>
            <person name="Dobrindt U."/>
            <person name="Brzuszkiewicz E."/>
            <person name="Gottschalk G."/>
            <person name="Carniel E."/>
            <person name="Hacker J."/>
        </authorList>
    </citation>
    <scope>NUCLEOTIDE SEQUENCE [LARGE SCALE GENOMIC DNA]</scope>
    <source>
        <strain>536 / UPEC</strain>
    </source>
</reference>
<comment type="catalytic activity">
    <reaction evidence="1">
        <text>D-altronate + NAD(+) = keto-D-tagaturonate + NADH + H(+)</text>
        <dbReference type="Rhea" id="RHEA:17813"/>
        <dbReference type="ChEBI" id="CHEBI:15378"/>
        <dbReference type="ChEBI" id="CHEBI:17360"/>
        <dbReference type="ChEBI" id="CHEBI:17886"/>
        <dbReference type="ChEBI" id="CHEBI:57540"/>
        <dbReference type="ChEBI" id="CHEBI:57945"/>
        <dbReference type="EC" id="1.1.1.58"/>
    </reaction>
</comment>
<comment type="pathway">
    <text evidence="1">Carbohydrate metabolism; pentose and glucuronate interconversion.</text>
</comment>
<comment type="similarity">
    <text evidence="1">Belongs to the mannitol dehydrogenase family. UxaB subfamily.</text>
</comment>
<keyword id="KW-0520">NAD</keyword>
<keyword id="KW-0560">Oxidoreductase</keyword>
<sequence length="483" mass="54860">MKTLNRRDFPGAQYPERIIQFGEGNFLRAFVDWQIDLLNEHTDLNSGVVVVRPIETSFPPSLSTQDGLYTTIIRGLNEKGEAVSDARLIRSVNREISVYSEYDEFLKLAHNPEMRFVFSNTTEAGISYHAGDKFDDAPAVSYPAKLTRLLFERFSHFNGALDKGWIIIPCELIDYNGDALRELVLRYAQEWALPEAFIQWLDQANSFCSTLVDRIVTGYPRDEVAKLEEELGYHDGFLDTAEYFYLFVIQGPKSLATELRLDKYPLNVLIVDDIKPYKERKVAILNGAHTALVPVAFQAGLDTVGEAMNDAEICAFVEKAIYEEIIPVLDLPRDELESFASAVTGRFRNPYIKHQLLSIALNGMTKFRTRILPQLLAGQKANGTLPARLTFALAALIAFYRGERNGETYPVQDDAHWLERYQQLWSQYRDRVIGTQELVAIVLAEKDHWEQDLTQVPGLVEQVANDLDAILEKGMREAVRPLC</sequence>
<feature type="chain" id="PRO_1000044703" description="Altronate oxidoreductase">
    <location>
        <begin position="1"/>
        <end position="483"/>
    </location>
</feature>
<feature type="binding site" evidence="1">
    <location>
        <begin position="18"/>
        <end position="29"/>
    </location>
    <ligand>
        <name>NAD(+)</name>
        <dbReference type="ChEBI" id="CHEBI:57540"/>
    </ligand>
</feature>
<proteinExistence type="inferred from homology"/>
<evidence type="ECO:0000255" key="1">
    <source>
        <dbReference type="HAMAP-Rule" id="MF_00670"/>
    </source>
</evidence>
<gene>
    <name evidence="1" type="primary">uxaB</name>
    <name type="ordered locus">ECP_1505</name>
</gene>
<name>UXAB_ECOL5</name>
<organism>
    <name type="scientific">Escherichia coli O6:K15:H31 (strain 536 / UPEC)</name>
    <dbReference type="NCBI Taxonomy" id="362663"/>
    <lineage>
        <taxon>Bacteria</taxon>
        <taxon>Pseudomonadati</taxon>
        <taxon>Pseudomonadota</taxon>
        <taxon>Gammaproteobacteria</taxon>
        <taxon>Enterobacterales</taxon>
        <taxon>Enterobacteriaceae</taxon>
        <taxon>Escherichia</taxon>
    </lineage>
</organism>
<protein>
    <recommendedName>
        <fullName evidence="1">Altronate oxidoreductase</fullName>
        <ecNumber evidence="1">1.1.1.58</ecNumber>
    </recommendedName>
    <alternativeName>
        <fullName evidence="1">Tagaturonate dehydrogenase</fullName>
    </alternativeName>
    <alternativeName>
        <fullName evidence="1">Tagaturonate reductase</fullName>
    </alternativeName>
</protein>